<accession>Q8K3P1</accession>
<accession>Q3KP15</accession>
<accession>Q3TYV0</accession>
<accession>Q812E6</accession>
<accession>Q812E7</accession>
<reference key="1">
    <citation type="journal article" date="2006" name="Mol. Pharmacol.">
        <title>Carboxyl-terminal splicing enhances physical interactions between the cytoplasmic tails of purinergic P2X receptors.</title>
        <authorList>
            <person name="Koshimizu T.A."/>
            <person name="Kretschmannova K."/>
            <person name="He M.L."/>
            <person name="Ueno S."/>
            <person name="Tanoue A."/>
            <person name="Yanagihara N."/>
            <person name="Stojilkovic S.S."/>
            <person name="Tsujimoto G."/>
        </authorList>
    </citation>
    <scope>NUCLEOTIDE SEQUENCE [MRNA] (ISOFORMS 1; 2 AND 3)</scope>
    <source>
        <tissue>Pituitary</tissue>
    </source>
</reference>
<reference key="2">
    <citation type="journal article" date="2005" name="Science">
        <title>The transcriptional landscape of the mammalian genome.</title>
        <authorList>
            <person name="Carninci P."/>
            <person name="Kasukawa T."/>
            <person name="Katayama S."/>
            <person name="Gough J."/>
            <person name="Frith M.C."/>
            <person name="Maeda N."/>
            <person name="Oyama R."/>
            <person name="Ravasi T."/>
            <person name="Lenhard B."/>
            <person name="Wells C."/>
            <person name="Kodzius R."/>
            <person name="Shimokawa K."/>
            <person name="Bajic V.B."/>
            <person name="Brenner S.E."/>
            <person name="Batalov S."/>
            <person name="Forrest A.R."/>
            <person name="Zavolan M."/>
            <person name="Davis M.J."/>
            <person name="Wilming L.G."/>
            <person name="Aidinis V."/>
            <person name="Allen J.E."/>
            <person name="Ambesi-Impiombato A."/>
            <person name="Apweiler R."/>
            <person name="Aturaliya R.N."/>
            <person name="Bailey T.L."/>
            <person name="Bansal M."/>
            <person name="Baxter L."/>
            <person name="Beisel K.W."/>
            <person name="Bersano T."/>
            <person name="Bono H."/>
            <person name="Chalk A.M."/>
            <person name="Chiu K.P."/>
            <person name="Choudhary V."/>
            <person name="Christoffels A."/>
            <person name="Clutterbuck D.R."/>
            <person name="Crowe M.L."/>
            <person name="Dalla E."/>
            <person name="Dalrymple B.P."/>
            <person name="de Bono B."/>
            <person name="Della Gatta G."/>
            <person name="di Bernardo D."/>
            <person name="Down T."/>
            <person name="Engstrom P."/>
            <person name="Fagiolini M."/>
            <person name="Faulkner G."/>
            <person name="Fletcher C.F."/>
            <person name="Fukushima T."/>
            <person name="Furuno M."/>
            <person name="Futaki S."/>
            <person name="Gariboldi M."/>
            <person name="Georgii-Hemming P."/>
            <person name="Gingeras T.R."/>
            <person name="Gojobori T."/>
            <person name="Green R.E."/>
            <person name="Gustincich S."/>
            <person name="Harbers M."/>
            <person name="Hayashi Y."/>
            <person name="Hensch T.K."/>
            <person name="Hirokawa N."/>
            <person name="Hill D."/>
            <person name="Huminiecki L."/>
            <person name="Iacono M."/>
            <person name="Ikeo K."/>
            <person name="Iwama A."/>
            <person name="Ishikawa T."/>
            <person name="Jakt M."/>
            <person name="Kanapin A."/>
            <person name="Katoh M."/>
            <person name="Kawasawa Y."/>
            <person name="Kelso J."/>
            <person name="Kitamura H."/>
            <person name="Kitano H."/>
            <person name="Kollias G."/>
            <person name="Krishnan S.P."/>
            <person name="Kruger A."/>
            <person name="Kummerfeld S.K."/>
            <person name="Kurochkin I.V."/>
            <person name="Lareau L.F."/>
            <person name="Lazarevic D."/>
            <person name="Lipovich L."/>
            <person name="Liu J."/>
            <person name="Liuni S."/>
            <person name="McWilliam S."/>
            <person name="Madan Babu M."/>
            <person name="Madera M."/>
            <person name="Marchionni L."/>
            <person name="Matsuda H."/>
            <person name="Matsuzawa S."/>
            <person name="Miki H."/>
            <person name="Mignone F."/>
            <person name="Miyake S."/>
            <person name="Morris K."/>
            <person name="Mottagui-Tabar S."/>
            <person name="Mulder N."/>
            <person name="Nakano N."/>
            <person name="Nakauchi H."/>
            <person name="Ng P."/>
            <person name="Nilsson R."/>
            <person name="Nishiguchi S."/>
            <person name="Nishikawa S."/>
            <person name="Nori F."/>
            <person name="Ohara O."/>
            <person name="Okazaki Y."/>
            <person name="Orlando V."/>
            <person name="Pang K.C."/>
            <person name="Pavan W.J."/>
            <person name="Pavesi G."/>
            <person name="Pesole G."/>
            <person name="Petrovsky N."/>
            <person name="Piazza S."/>
            <person name="Reed J."/>
            <person name="Reid J.F."/>
            <person name="Ring B.Z."/>
            <person name="Ringwald M."/>
            <person name="Rost B."/>
            <person name="Ruan Y."/>
            <person name="Salzberg S.L."/>
            <person name="Sandelin A."/>
            <person name="Schneider C."/>
            <person name="Schoenbach C."/>
            <person name="Sekiguchi K."/>
            <person name="Semple C.A."/>
            <person name="Seno S."/>
            <person name="Sessa L."/>
            <person name="Sheng Y."/>
            <person name="Shibata Y."/>
            <person name="Shimada H."/>
            <person name="Shimada K."/>
            <person name="Silva D."/>
            <person name="Sinclair B."/>
            <person name="Sperling S."/>
            <person name="Stupka E."/>
            <person name="Sugiura K."/>
            <person name="Sultana R."/>
            <person name="Takenaka Y."/>
            <person name="Taki K."/>
            <person name="Tammoja K."/>
            <person name="Tan S.L."/>
            <person name="Tang S."/>
            <person name="Taylor M.S."/>
            <person name="Tegner J."/>
            <person name="Teichmann S.A."/>
            <person name="Ueda H.R."/>
            <person name="van Nimwegen E."/>
            <person name="Verardo R."/>
            <person name="Wei C.L."/>
            <person name="Yagi K."/>
            <person name="Yamanishi H."/>
            <person name="Zabarovsky E."/>
            <person name="Zhu S."/>
            <person name="Zimmer A."/>
            <person name="Hide W."/>
            <person name="Bult C."/>
            <person name="Grimmond S.M."/>
            <person name="Teasdale R.D."/>
            <person name="Liu E.T."/>
            <person name="Brusic V."/>
            <person name="Quackenbush J."/>
            <person name="Wahlestedt C."/>
            <person name="Mattick J.S."/>
            <person name="Hume D.A."/>
            <person name="Kai C."/>
            <person name="Sasaki D."/>
            <person name="Tomaru Y."/>
            <person name="Fukuda S."/>
            <person name="Kanamori-Katayama M."/>
            <person name="Suzuki M."/>
            <person name="Aoki J."/>
            <person name="Arakawa T."/>
            <person name="Iida J."/>
            <person name="Imamura K."/>
            <person name="Itoh M."/>
            <person name="Kato T."/>
            <person name="Kawaji H."/>
            <person name="Kawagashira N."/>
            <person name="Kawashima T."/>
            <person name="Kojima M."/>
            <person name="Kondo S."/>
            <person name="Konno H."/>
            <person name="Nakano K."/>
            <person name="Ninomiya N."/>
            <person name="Nishio T."/>
            <person name="Okada M."/>
            <person name="Plessy C."/>
            <person name="Shibata K."/>
            <person name="Shiraki T."/>
            <person name="Suzuki S."/>
            <person name="Tagami M."/>
            <person name="Waki K."/>
            <person name="Watahiki A."/>
            <person name="Okamura-Oho Y."/>
            <person name="Suzuki H."/>
            <person name="Kawai J."/>
            <person name="Hayashizaki Y."/>
        </authorList>
    </citation>
    <scope>NUCLEOTIDE SEQUENCE [LARGE SCALE MRNA] (ISOFORMS 1 AND 5)</scope>
    <source>
        <strain>C57BL/6J</strain>
        <tissue>Cerebellum</tissue>
        <tissue>Inner ear</tissue>
    </source>
</reference>
<reference key="3">
    <citation type="journal article" date="2009" name="PLoS Biol.">
        <title>Lineage-specific biology revealed by a finished genome assembly of the mouse.</title>
        <authorList>
            <person name="Church D.M."/>
            <person name="Goodstadt L."/>
            <person name="Hillier L.W."/>
            <person name="Zody M.C."/>
            <person name="Goldstein S."/>
            <person name="She X."/>
            <person name="Bult C.J."/>
            <person name="Agarwala R."/>
            <person name="Cherry J.L."/>
            <person name="DiCuccio M."/>
            <person name="Hlavina W."/>
            <person name="Kapustin Y."/>
            <person name="Meric P."/>
            <person name="Maglott D."/>
            <person name="Birtle Z."/>
            <person name="Marques A.C."/>
            <person name="Graves T."/>
            <person name="Zhou S."/>
            <person name="Teague B."/>
            <person name="Potamousis K."/>
            <person name="Churas C."/>
            <person name="Place M."/>
            <person name="Herschleb J."/>
            <person name="Runnheim R."/>
            <person name="Forrest D."/>
            <person name="Amos-Landgraf J."/>
            <person name="Schwartz D.C."/>
            <person name="Cheng Z."/>
            <person name="Lindblad-Toh K."/>
            <person name="Eichler E.E."/>
            <person name="Ponting C.P."/>
        </authorList>
    </citation>
    <scope>NUCLEOTIDE SEQUENCE [LARGE SCALE GENOMIC DNA]</scope>
    <source>
        <strain>C57BL/6J</strain>
    </source>
</reference>
<reference key="4">
    <citation type="submission" date="2005-07" db="EMBL/GenBank/DDBJ databases">
        <authorList>
            <person name="Mural R.J."/>
            <person name="Adams M.D."/>
            <person name="Myers E.W."/>
            <person name="Smith H.O."/>
            <person name="Venter J.C."/>
        </authorList>
    </citation>
    <scope>NUCLEOTIDE SEQUENCE [LARGE SCALE GENOMIC DNA]</scope>
</reference>
<reference key="5">
    <citation type="journal article" date="2004" name="Genome Res.">
        <title>The status, quality, and expansion of the NIH full-length cDNA project: the Mammalian Gene Collection (MGC).</title>
        <authorList>
            <consortium name="The MGC Project Team"/>
        </authorList>
    </citation>
    <scope>NUCLEOTIDE SEQUENCE [LARGE SCALE MRNA] (ISOFORM 4)</scope>
</reference>
<reference key="6">
    <citation type="journal article" date="2003" name="J. Neurosci.">
        <title>ATP modulation of excitatory synapses onto interneurons.</title>
        <authorList>
            <person name="Khakh B.S."/>
            <person name="Gittermann D."/>
            <person name="Cockayne D.A."/>
            <person name="Jones A."/>
        </authorList>
    </citation>
    <scope>FUNCTION</scope>
</reference>
<reference key="7">
    <citation type="journal article" date="2003" name="J. Physiol. (Lond.)">
        <title>P2X2 subunits contribute to fast synaptic excitation in myenteric neurons of the mouse small intestine.</title>
        <authorList>
            <person name="Ren J."/>
            <person name="Bian X."/>
            <person name="DeVries M."/>
            <person name="Schnegelsberg B."/>
            <person name="Cockayne D.A."/>
            <person name="Ford A.P."/>
            <person name="Galligan J.J."/>
        </authorList>
    </citation>
    <scope>FUNCTION</scope>
    <scope>DISRUPTION PHENOTYPE</scope>
</reference>
<reference key="8">
    <citation type="journal article" date="2003" name="J. Neurosci.">
        <title>Pivotal role of nucleotide P2X2 receptor subunit of the ATP-gated ion channel mediating ventilatory responses to hypoxia.</title>
        <authorList>
            <person name="Rong W."/>
            <person name="Gourine A.V."/>
            <person name="Cockayne D.A."/>
            <person name="Xiang Z."/>
            <person name="Ford A.P."/>
            <person name="Spyer K.M."/>
            <person name="Burnstock G."/>
        </authorList>
    </citation>
    <scope>DISRUPTION PHENOTYPE</scope>
</reference>
<reference key="9">
    <citation type="journal article" date="2005" name="J. Physiol. (Lond.)">
        <title>P2X2 knockout mice and P2X2/P2X3 double knockout mice reveal a role for the P2X2 receptor subunit in mediating multiple sensory effects of ATP.</title>
        <authorList>
            <person name="Cockayne D.A."/>
            <person name="Dunn P.M."/>
            <person name="Zhong Y."/>
            <person name="Rong W."/>
            <person name="Hamilton S.G."/>
            <person name="Knight G.E."/>
            <person name="Ruan H.Z."/>
            <person name="Ma B."/>
            <person name="Yip P."/>
            <person name="Nunn P."/>
            <person name="McMahon S.B."/>
            <person name="Burnstock G."/>
            <person name="Ford A.P."/>
        </authorList>
    </citation>
    <scope>FUNCTION</scope>
    <scope>DISRUPTION PHENOTYPE</scope>
</reference>
<reference key="10">
    <citation type="journal article" date="2005" name="Science">
        <title>ATP signaling is crucial for communication from taste buds to gustatory nerves.</title>
        <authorList>
            <person name="Finger T.E."/>
            <person name="Danilova V."/>
            <person name="Barrows J."/>
            <person name="Bartel D.L."/>
            <person name="Vigers A.J."/>
            <person name="Stone L."/>
            <person name="Hellekant G."/>
            <person name="Kinnamon S.C."/>
        </authorList>
    </citation>
    <scope>FUNCTION</scope>
    <scope>DISRUPTION PHENOTYPE</scope>
</reference>
<reference key="11">
    <citation type="journal article" date="2007" name="Neuroscience">
        <title>Abnormalities in neuromuscular junction structure and skeletal muscle function in mice lacking the P2X2 nucleotide receptor.</title>
        <authorList>
            <person name="Ryten M."/>
            <person name="Koshi R."/>
            <person name="Knight G.E."/>
            <person name="Turmaine M."/>
            <person name="Dunn P."/>
            <person name="Cockayne D.A."/>
            <person name="Ford A.P."/>
            <person name="Burnstock G."/>
        </authorList>
    </citation>
    <scope>FUNCTION</scope>
    <scope>SUBCELLULAR LOCATION</scope>
    <scope>DISRUPTION PHENOTYPE</scope>
    <scope>DEVELOPMENTAL STAGE</scope>
</reference>
<reference key="12">
    <citation type="journal article" date="2013" name="Proc. Natl. Acad. Sci. U.S.A.">
        <title>Mutation of the ATP-gated P2X(2) receptor leads to progressive hearing loss and increased susceptibility to noise.</title>
        <authorList>
            <person name="Yan D."/>
            <person name="Zhu Y."/>
            <person name="Walsh T."/>
            <person name="Xie D."/>
            <person name="Yuan H."/>
            <person name="Sirmaci A."/>
            <person name="Fujikawa T."/>
            <person name="Wong A.C."/>
            <person name="Loh T.L."/>
            <person name="Du L."/>
            <person name="Grati M."/>
            <person name="Vlajkovic S.M."/>
            <person name="Blanton S."/>
            <person name="Ryan A.F."/>
            <person name="Chen Z.Y."/>
            <person name="Thorne P.R."/>
            <person name="Kachar B."/>
            <person name="Tekin M."/>
            <person name="Zhao H.B."/>
            <person name="Housley G.D."/>
            <person name="King M.C."/>
            <person name="Liu X.Z."/>
        </authorList>
    </citation>
    <scope>FUNCTION</scope>
    <scope>DISRUPTION PHENOTYPE</scope>
</reference>
<name>P2RX2_MOUSE</name>
<comment type="function">
    <text evidence="3 6 7 9 10 11 12">ATP-gated nonselective transmembrane cation channel permeable to potassium, sodium and calcium (By similarity). Activation by extracellular ATP induces a variety of cellular responses, such as excitatory postsynaptic responses in sensory neurons, neuromuscular junctions (NMJ) formation, hearing, perception of taste and peristalsis. In the inner ear, regulates sound transduction and auditory neurotransmission, outer hair cell electromotility, inner ear gap junctions, and K(+) recycling. Mediates synaptic transmission between neurons and from neurons to smooth muscle (PubMed:12917379, PubMed:12937291, PubMed:15961431, PubMed:16322458, PubMed:17706883, PubMed:23345450).</text>
</comment>
<comment type="catalytic activity">
    <reaction evidence="3">
        <text>Ca(2+)(in) = Ca(2+)(out)</text>
        <dbReference type="Rhea" id="RHEA:29671"/>
        <dbReference type="ChEBI" id="CHEBI:29108"/>
    </reaction>
</comment>
<comment type="catalytic activity">
    <reaction evidence="1">
        <text>K(+)(in) = K(+)(out)</text>
        <dbReference type="Rhea" id="RHEA:29463"/>
        <dbReference type="ChEBI" id="CHEBI:29103"/>
    </reaction>
</comment>
<comment type="catalytic activity">
    <reaction evidence="1">
        <text>Na(+)(in) = Na(+)(out)</text>
        <dbReference type="Rhea" id="RHEA:34963"/>
        <dbReference type="ChEBI" id="CHEBI:29101"/>
    </reaction>
</comment>
<comment type="activity regulation">
    <text evidence="1 3">Fast activation by external ATP (By similarity). Exhibits slow desensitization during prolonged ATP activation (By similarity). Not sensitive to the ATP agonist:alpha/beta-methylene-ATP (By similarity).</text>
</comment>
<comment type="subunit">
    <text evidence="1">Homotrimer and heterotrimer; functional P2XRs are organized as homomeric and heteromeric trimers. Homotrimer. Forms heterotrimer with P2XR1. Forms heterotrimer with P2XR3. Forms heterotrimer with P2XR6.</text>
</comment>
<comment type="subcellular location">
    <subcellularLocation>
        <location evidence="11">Cell membrane</location>
        <topology evidence="2">Multi-pass membrane protein</topology>
    </subcellularLocation>
</comment>
<comment type="alternative products">
    <event type="alternative splicing"/>
    <isoform>
        <id>Q8K3P1-1</id>
        <name>1</name>
        <sequence type="displayed"/>
    </isoform>
    <isoform>
        <id>Q8K3P1-2</id>
        <name>2</name>
        <sequence type="described" ref="VSP_053890"/>
    </isoform>
    <isoform>
        <id>Q8K3P1-3</id>
        <name>3</name>
        <sequence type="described" ref="VSP_053889"/>
    </isoform>
    <isoform>
        <id>Q8K3P1-4</id>
        <name>4</name>
        <sequence type="described" ref="VSP_053887"/>
    </isoform>
    <isoform>
        <id>Q8K3P1-5</id>
        <name>5</name>
        <sequence type="described" ref="VSP_053888"/>
    </isoform>
</comment>
<comment type="developmental stage">
    <text evidence="11">In skeletal muscle, strongly expressed in postnatal day 3 (P3), P7 and P15 muscles. Expression is not maintained in P21 in adult skeletal muscle (at protein level).</text>
</comment>
<comment type="disruption phenotype">
    <text evidence="7 8 9 10 11 12">Mice show small differences in body weight, but are visibly and histopathologically normal for up to 1 year of age. Simultaneous knockout of P2rx2 and P2rx3 results in reduced pain-related behaviors in response to intraplantar injection of formalin and reduced urinary bladder reflexes and decreased pelvic afferent nerve activity in response to bladder distension. Neurons have minimal to no response to ATP (PubMed:15961431). P2rx2 null mice show impaired peristalsis in ileal segments of small intestine (PubMed:12937291). P2rx2 null mice show disorganized neuromuscular junctions (NMJ) with misapposition of nerve terminals and post-synaptic AChR expression localization, reduction of the density of post-synaptic and increased end-plate fragmentation. These changes in NMJ structure are associated with muscle fiber atrophy and an increase in the proportion of fast type muscle fibers (PubMed:17706883). P2rx2 null mice display age-related hearing loss: in the absence of exposure to noise, auditory thresholds are normal until at least age 19-23 week. Then, mice develop severe progressive hearing loss, and their early exposure to continuous moderate noise leads to high-frequency hearing loss as young adults (PubMed:23345450). Simultaneous knockout of P2rx2 and P2rx3 results in defects in taste responses in the taste nerves and reduced behavioral responses to sweeteners, glutamate and bitter substances (PubMed:16322458).</text>
</comment>
<comment type="similarity">
    <text evidence="16">Belongs to the P2X receptor family.</text>
</comment>
<keyword id="KW-0025">Alternative splicing</keyword>
<keyword id="KW-0067">ATP-binding</keyword>
<keyword id="KW-1003">Cell membrane</keyword>
<keyword id="KW-1015">Disulfide bond</keyword>
<keyword id="KW-0325">Glycoprotein</keyword>
<keyword id="KW-1009">Hearing</keyword>
<keyword id="KW-0407">Ion channel</keyword>
<keyword id="KW-0406">Ion transport</keyword>
<keyword id="KW-1071">Ligand-gated ion channel</keyword>
<keyword id="KW-0472">Membrane</keyword>
<keyword id="KW-0547">Nucleotide-binding</keyword>
<keyword id="KW-1185">Reference proteome</keyword>
<keyword id="KW-0812">Transmembrane</keyword>
<keyword id="KW-1133">Transmembrane helix</keyword>
<keyword id="KW-0813">Transport</keyword>
<gene>
    <name type="primary">P2rx2</name>
    <name type="synonym">P2x2</name>
</gene>
<protein>
    <recommendedName>
        <fullName>P2X purinoceptor 2</fullName>
        <shortName>P2X2</shortName>
    </recommendedName>
    <alternativeName>
        <fullName>ATP receptor</fullName>
    </alternativeName>
    <alternativeName>
        <fullName>Purinergic receptor</fullName>
    </alternativeName>
</protein>
<feature type="chain" id="PRO_0000425905" description="P2X purinoceptor 2">
    <location>
        <begin position="1"/>
        <end position="485"/>
    </location>
</feature>
<feature type="topological domain" description="Cytoplasmic" evidence="2">
    <location>
        <begin position="1"/>
        <end position="43"/>
    </location>
</feature>
<feature type="transmembrane region" description="Helical; Name=1" evidence="2">
    <location>
        <begin position="44"/>
        <end position="64"/>
    </location>
</feature>
<feature type="topological domain" description="Extracellular" evidence="2">
    <location>
        <begin position="65"/>
        <end position="339"/>
    </location>
</feature>
<feature type="transmembrane region" description="Helical; Name=2" evidence="2">
    <location>
        <begin position="340"/>
        <end position="360"/>
    </location>
</feature>
<feature type="topological domain" description="Cytoplasmic" evidence="2">
    <location>
        <begin position="361"/>
        <end position="485"/>
    </location>
</feature>
<feature type="region of interest" description="Pore-forming motif" evidence="4">
    <location>
        <begin position="322"/>
        <end position="335"/>
    </location>
</feature>
<feature type="region of interest" description="Disordered" evidence="5">
    <location>
        <begin position="406"/>
        <end position="485"/>
    </location>
</feature>
<feature type="compositionally biased region" description="Low complexity" evidence="5">
    <location>
        <begin position="420"/>
        <end position="436"/>
    </location>
</feature>
<feature type="compositionally biased region" description="Polar residues" evidence="5">
    <location>
        <begin position="469"/>
        <end position="478"/>
    </location>
</feature>
<feature type="binding site" evidence="2">
    <location>
        <position position="82"/>
    </location>
    <ligand>
        <name>ATP</name>
        <dbReference type="ChEBI" id="CHEBI:30616"/>
    </ligand>
</feature>
<feature type="binding site" evidence="2">
    <location>
        <position position="84"/>
    </location>
    <ligand>
        <name>ATP</name>
        <dbReference type="ChEBI" id="CHEBI:30616"/>
    </ligand>
</feature>
<feature type="binding site" evidence="2">
    <location>
        <position position="197"/>
    </location>
    <ligand>
        <name>ATP</name>
        <dbReference type="ChEBI" id="CHEBI:30616"/>
    </ligand>
</feature>
<feature type="binding site" evidence="2">
    <location>
        <position position="297"/>
    </location>
    <ligand>
        <name>ATP</name>
        <dbReference type="ChEBI" id="CHEBI:30616"/>
    </ligand>
</feature>
<feature type="binding site" evidence="2">
    <location>
        <position position="301"/>
    </location>
    <ligand>
        <name>ATP</name>
        <dbReference type="ChEBI" id="CHEBI:30616"/>
    </ligand>
</feature>
<feature type="binding site" evidence="2">
    <location>
        <position position="303"/>
    </location>
    <ligand>
        <name>ATP</name>
        <dbReference type="ChEBI" id="CHEBI:30616"/>
    </ligand>
</feature>
<feature type="binding site" evidence="2">
    <location>
        <position position="321"/>
    </location>
    <ligand>
        <name>ATP</name>
        <dbReference type="ChEBI" id="CHEBI:30616"/>
    </ligand>
</feature>
<feature type="glycosylation site" description="N-linked (GlcNAc...) asparagine" evidence="4">
    <location>
        <position position="195"/>
    </location>
</feature>
<feature type="glycosylation site" description="N-linked (GlcNAc...) asparagine" evidence="4">
    <location>
        <position position="252"/>
    </location>
</feature>
<feature type="glycosylation site" description="N-linked (GlcNAc...) asparagine" evidence="4">
    <location>
        <position position="311"/>
    </location>
</feature>
<feature type="disulfide bond" evidence="1">
    <location>
        <begin position="22"/>
        <end position="443"/>
    </location>
</feature>
<feature type="disulfide bond" evidence="2">
    <location>
        <begin position="126"/>
        <end position="177"/>
    </location>
</feature>
<feature type="disulfide bond" evidence="2">
    <location>
        <begin position="137"/>
        <end position="160"/>
    </location>
</feature>
<feature type="disulfide bond" evidence="2">
    <location>
        <begin position="143"/>
        <end position="171"/>
    </location>
</feature>
<feature type="disulfide bond" evidence="2">
    <location>
        <begin position="227"/>
        <end position="237"/>
    </location>
</feature>
<feature type="disulfide bond" evidence="2">
    <location>
        <begin position="271"/>
        <end position="280"/>
    </location>
</feature>
<feature type="splice variant" id="VSP_053887" description="In isoform 4." evidence="13">
    <location>
        <begin position="1"/>
        <end position="87"/>
    </location>
</feature>
<feature type="splice variant" id="VSP_053888" description="In isoform 5." evidence="14">
    <original>W</original>
    <variation>WVASGAGTALSHR</variation>
    <location>
        <position position="59"/>
    </location>
</feature>
<feature type="splice variant" id="VSP_053889" description="In isoform 3." evidence="15">
    <location>
        <begin position="383"/>
        <end position="472"/>
    </location>
</feature>
<feature type="splice variant" id="VSP_053890" description="In isoform 2." evidence="15">
    <location>
        <begin position="383"/>
        <end position="451"/>
    </location>
</feature>
<feature type="sequence conflict" description="In Ref. 2; BAE34462." evidence="16" ref="2">
    <original>I</original>
    <variation>T</variation>
    <location>
        <position position="341"/>
    </location>
</feature>
<proteinExistence type="evidence at protein level"/>
<dbReference type="EMBL" id="AY044240">
    <property type="protein sequence ID" value="AAK95327.2"/>
    <property type="molecule type" value="mRNA"/>
</dbReference>
<dbReference type="EMBL" id="AB094663">
    <property type="protein sequence ID" value="BAC55013.1"/>
    <property type="molecule type" value="mRNA"/>
</dbReference>
<dbReference type="EMBL" id="AB094664">
    <property type="protein sequence ID" value="BAC55014.1"/>
    <property type="molecule type" value="mRNA"/>
</dbReference>
<dbReference type="EMBL" id="AK141196">
    <property type="protein sequence ID" value="BAE24579.1"/>
    <property type="molecule type" value="mRNA"/>
</dbReference>
<dbReference type="EMBL" id="AK158334">
    <property type="protein sequence ID" value="BAE34462.1"/>
    <property type="molecule type" value="mRNA"/>
</dbReference>
<dbReference type="EMBL" id="AC123699">
    <property type="status" value="NOT_ANNOTATED_CDS"/>
    <property type="molecule type" value="Genomic_DNA"/>
</dbReference>
<dbReference type="EMBL" id="CH466529">
    <property type="protein sequence ID" value="EDL20025.1"/>
    <property type="molecule type" value="Genomic_DNA"/>
</dbReference>
<dbReference type="EMBL" id="BC106964">
    <property type="protein sequence ID" value="AAI06965.1"/>
    <property type="molecule type" value="mRNA"/>
</dbReference>
<dbReference type="CCDS" id="CCDS51607.1">
    <molecule id="Q8K3P1-1"/>
</dbReference>
<dbReference type="CCDS" id="CCDS51608.1">
    <molecule id="Q8K3P1-2"/>
</dbReference>
<dbReference type="CCDS" id="CCDS80361.1">
    <molecule id="Q8K3P1-4"/>
</dbReference>
<dbReference type="CCDS" id="CCDS80362.1">
    <molecule id="Q8K3P1-3"/>
</dbReference>
<dbReference type="CCDS" id="CCDS80363.1">
    <molecule id="Q8K3P1-5"/>
</dbReference>
<dbReference type="RefSeq" id="NP_001158305.1">
    <molecule id="Q8K3P1-2"/>
    <property type="nucleotide sequence ID" value="NM_001164833.1"/>
</dbReference>
<dbReference type="RefSeq" id="NP_001158306.1">
    <molecule id="Q8K3P1-3"/>
    <property type="nucleotide sequence ID" value="NM_001164834.1"/>
</dbReference>
<dbReference type="RefSeq" id="NP_001297629.1">
    <molecule id="Q8K3P1-5"/>
    <property type="nucleotide sequence ID" value="NM_001310700.1"/>
</dbReference>
<dbReference type="RefSeq" id="NP_001297630.1">
    <molecule id="Q8K3P1-4"/>
    <property type="nucleotide sequence ID" value="NM_001310701.1"/>
</dbReference>
<dbReference type="RefSeq" id="NP_700449.2">
    <molecule id="Q8K3P1-1"/>
    <property type="nucleotide sequence ID" value="NM_153400.4"/>
</dbReference>
<dbReference type="RefSeq" id="XP_011247750.1">
    <molecule id="Q8K3P1-4"/>
    <property type="nucleotide sequence ID" value="XM_011249448.2"/>
</dbReference>
<dbReference type="SMR" id="Q8K3P1"/>
<dbReference type="FunCoup" id="Q8K3P1">
    <property type="interactions" value="601"/>
</dbReference>
<dbReference type="STRING" id="10090.ENSMUSP00000054233"/>
<dbReference type="GlyCosmos" id="Q8K3P1">
    <property type="glycosylation" value="3 sites, No reported glycans"/>
</dbReference>
<dbReference type="GlyGen" id="Q8K3P1">
    <property type="glycosylation" value="3 sites"/>
</dbReference>
<dbReference type="PhosphoSitePlus" id="Q8K3P1"/>
<dbReference type="SwissPalm" id="Q8K3P1"/>
<dbReference type="PaxDb" id="10090-ENSMUSP00000054233"/>
<dbReference type="ProteomicsDB" id="294298">
    <molecule id="Q8K3P1-1"/>
</dbReference>
<dbReference type="ProteomicsDB" id="294299">
    <molecule id="Q8K3P1-2"/>
</dbReference>
<dbReference type="ProteomicsDB" id="294300">
    <molecule id="Q8K3P1-3"/>
</dbReference>
<dbReference type="ProteomicsDB" id="294301">
    <molecule id="Q8K3P1-4"/>
</dbReference>
<dbReference type="ProteomicsDB" id="294302">
    <molecule id="Q8K3P1-5"/>
</dbReference>
<dbReference type="Antibodypedia" id="2714">
    <property type="antibodies" value="329 antibodies from 32 providers"/>
</dbReference>
<dbReference type="DNASU" id="231602"/>
<dbReference type="Ensembl" id="ENSMUST00000058016.16">
    <molecule id="Q8K3P1-5"/>
    <property type="protein sequence ID" value="ENSMUSP00000054233.11"/>
    <property type="gene ID" value="ENSMUSG00000029503.17"/>
</dbReference>
<dbReference type="Ensembl" id="ENSMUST00000112478.8">
    <molecule id="Q8K3P1-2"/>
    <property type="protein sequence ID" value="ENSMUSP00000108097.4"/>
    <property type="gene ID" value="ENSMUSG00000029503.17"/>
</dbReference>
<dbReference type="Ensembl" id="ENSMUST00000195985.5">
    <molecule id="Q8K3P1-1"/>
    <property type="protein sequence ID" value="ENSMUSP00000143047.2"/>
    <property type="gene ID" value="ENSMUSG00000029503.17"/>
</dbReference>
<dbReference type="Ensembl" id="ENSMUST00000200037.5">
    <molecule id="Q8K3P1-3"/>
    <property type="protein sequence ID" value="ENSMUSP00000143554.2"/>
    <property type="gene ID" value="ENSMUSG00000029503.17"/>
</dbReference>
<dbReference type="Ensembl" id="ENSMUST00000200214.2">
    <molecule id="Q8K3P1-4"/>
    <property type="protein sequence ID" value="ENSMUSP00000142567.2"/>
    <property type="gene ID" value="ENSMUSG00000029503.17"/>
</dbReference>
<dbReference type="GeneID" id="231602"/>
<dbReference type="KEGG" id="mmu:231602"/>
<dbReference type="UCSC" id="uc008yqq.1">
    <molecule id="Q8K3P1-1"/>
    <property type="organism name" value="mouse"/>
</dbReference>
<dbReference type="UCSC" id="uc008yqs.2">
    <molecule id="Q8K3P1-3"/>
    <property type="organism name" value="mouse"/>
</dbReference>
<dbReference type="UCSC" id="uc008yqt.2">
    <molecule id="Q8K3P1-5"/>
    <property type="organism name" value="mouse"/>
</dbReference>
<dbReference type="UCSC" id="uc008yqu.2">
    <molecule id="Q8K3P1-2"/>
    <property type="organism name" value="mouse"/>
</dbReference>
<dbReference type="AGR" id="MGI:2665170"/>
<dbReference type="CTD" id="22953"/>
<dbReference type="MGI" id="MGI:2665170">
    <property type="gene designation" value="P2rx2"/>
</dbReference>
<dbReference type="VEuPathDB" id="HostDB:ENSMUSG00000029503"/>
<dbReference type="eggNOG" id="ENOG502QVP9">
    <property type="taxonomic scope" value="Eukaryota"/>
</dbReference>
<dbReference type="GeneTree" id="ENSGT01020000230351"/>
<dbReference type="InParanoid" id="Q8K3P1"/>
<dbReference type="OMA" id="YETPKIM"/>
<dbReference type="OrthoDB" id="43627at9989"/>
<dbReference type="PhylomeDB" id="Q8K3P1"/>
<dbReference type="TreeFam" id="TF328633"/>
<dbReference type="Reactome" id="R-MMU-139853">
    <property type="pathway name" value="Elevation of cytosolic Ca2+ levels"/>
</dbReference>
<dbReference type="Reactome" id="R-MMU-418346">
    <property type="pathway name" value="Platelet homeostasis"/>
</dbReference>
<dbReference type="BioGRID-ORCS" id="231602">
    <property type="hits" value="3 hits in 77 CRISPR screens"/>
</dbReference>
<dbReference type="PRO" id="PR:Q8K3P1"/>
<dbReference type="Proteomes" id="UP000000589">
    <property type="component" value="Chromosome 5"/>
</dbReference>
<dbReference type="RNAct" id="Q8K3P1">
    <property type="molecule type" value="protein"/>
</dbReference>
<dbReference type="Bgee" id="ENSMUSG00000029503">
    <property type="expression patterns" value="Expressed in vestibular membrane of cochlear duct and 57 other cell types or tissues"/>
</dbReference>
<dbReference type="GO" id="GO:0016324">
    <property type="term" value="C:apical plasma membrane"/>
    <property type="evidence" value="ECO:0000250"/>
    <property type="project" value="UniProtKB"/>
</dbReference>
<dbReference type="GO" id="GO:0098992">
    <property type="term" value="C:neuronal dense core vesicle"/>
    <property type="evidence" value="ECO:0000314"/>
    <property type="project" value="SynGO"/>
</dbReference>
<dbReference type="GO" id="GO:0005886">
    <property type="term" value="C:plasma membrane"/>
    <property type="evidence" value="ECO:0000314"/>
    <property type="project" value="MGI"/>
</dbReference>
<dbReference type="GO" id="GO:0098794">
    <property type="term" value="C:postsynapse"/>
    <property type="evidence" value="ECO:0007669"/>
    <property type="project" value="GOC"/>
</dbReference>
<dbReference type="GO" id="GO:0043235">
    <property type="term" value="C:receptor complex"/>
    <property type="evidence" value="ECO:0000266"/>
    <property type="project" value="MGI"/>
</dbReference>
<dbReference type="GO" id="GO:0005524">
    <property type="term" value="F:ATP binding"/>
    <property type="evidence" value="ECO:0007669"/>
    <property type="project" value="UniProtKB-KW"/>
</dbReference>
<dbReference type="GO" id="GO:0001228">
    <property type="term" value="F:DNA-binding transcription activator activity, RNA polymerase II-specific"/>
    <property type="evidence" value="ECO:0000250"/>
    <property type="project" value="UniProtKB"/>
</dbReference>
<dbReference type="GO" id="GO:0004931">
    <property type="term" value="F:extracellularly ATP-gated monoatomic cation channel activity"/>
    <property type="evidence" value="ECO:0000314"/>
    <property type="project" value="MGI"/>
</dbReference>
<dbReference type="GO" id="GO:0042802">
    <property type="term" value="F:identical protein binding"/>
    <property type="evidence" value="ECO:0007669"/>
    <property type="project" value="Ensembl"/>
</dbReference>
<dbReference type="GO" id="GO:0001614">
    <property type="term" value="F:purinergic nucleotide receptor activity"/>
    <property type="evidence" value="ECO:0007669"/>
    <property type="project" value="InterPro"/>
</dbReference>
<dbReference type="GO" id="GO:0048266">
    <property type="term" value="P:behavioral response to pain"/>
    <property type="evidence" value="ECO:0000315"/>
    <property type="project" value="MGI"/>
</dbReference>
<dbReference type="GO" id="GO:0007268">
    <property type="term" value="P:chemical synaptic transmission"/>
    <property type="evidence" value="ECO:0000315"/>
    <property type="project" value="MGI"/>
</dbReference>
<dbReference type="GO" id="GO:0003029">
    <property type="term" value="P:detection of hypoxic conditions in blood by carotid body chemoreceptor signaling"/>
    <property type="evidence" value="ECO:0000315"/>
    <property type="project" value="MGI"/>
</dbReference>
<dbReference type="GO" id="GO:0007528">
    <property type="term" value="P:neuromuscular junction development"/>
    <property type="evidence" value="ECO:0000315"/>
    <property type="project" value="MGI"/>
</dbReference>
<dbReference type="GO" id="GO:0007274">
    <property type="term" value="P:neuromuscular synaptic transmission"/>
    <property type="evidence" value="ECO:0000315"/>
    <property type="project" value="MGI"/>
</dbReference>
<dbReference type="GO" id="GO:0030432">
    <property type="term" value="P:peristalsis"/>
    <property type="evidence" value="ECO:0000315"/>
    <property type="project" value="MGI"/>
</dbReference>
<dbReference type="GO" id="GO:0033198">
    <property type="term" value="P:response to ATP"/>
    <property type="evidence" value="ECO:0000315"/>
    <property type="project" value="MGI"/>
</dbReference>
<dbReference type="GO" id="GO:0009743">
    <property type="term" value="P:response to carbohydrate"/>
    <property type="evidence" value="ECO:0000315"/>
    <property type="project" value="MGI"/>
</dbReference>
<dbReference type="GO" id="GO:0001666">
    <property type="term" value="P:response to hypoxia"/>
    <property type="evidence" value="ECO:0000315"/>
    <property type="project" value="MGI"/>
</dbReference>
<dbReference type="GO" id="GO:0007605">
    <property type="term" value="P:sensory perception of sound"/>
    <property type="evidence" value="ECO:0000315"/>
    <property type="project" value="UniProtKB"/>
</dbReference>
<dbReference type="GO" id="GO:0050909">
    <property type="term" value="P:sensory perception of taste"/>
    <property type="evidence" value="ECO:0000316"/>
    <property type="project" value="MGI"/>
</dbReference>
<dbReference type="GO" id="GO:0048741">
    <property type="term" value="P:skeletal muscle fiber development"/>
    <property type="evidence" value="ECO:0000315"/>
    <property type="project" value="MGI"/>
</dbReference>
<dbReference type="GO" id="GO:0014832">
    <property type="term" value="P:urinary bladder smooth muscle contraction"/>
    <property type="evidence" value="ECO:0000315"/>
    <property type="project" value="MGI"/>
</dbReference>
<dbReference type="FunFam" id="1.10.287.940:FF:000008">
    <property type="entry name" value="P2X purinoceptor"/>
    <property type="match status" value="1"/>
</dbReference>
<dbReference type="FunFam" id="2.60.490.10:FF:000001">
    <property type="entry name" value="P2X purinoceptor"/>
    <property type="match status" value="1"/>
</dbReference>
<dbReference type="Gene3D" id="1.10.287.940">
    <property type="entry name" value="atp-gated p2x4 ion channel"/>
    <property type="match status" value="1"/>
</dbReference>
<dbReference type="Gene3D" id="2.60.490.10">
    <property type="entry name" value="atp-gated p2x4 ion channel domain"/>
    <property type="match status" value="1"/>
</dbReference>
<dbReference type="InterPro" id="IPR003045">
    <property type="entry name" value="P2X2_purnocptor"/>
</dbReference>
<dbReference type="InterPro" id="IPR027309">
    <property type="entry name" value="P2X_extracellular_dom_sf"/>
</dbReference>
<dbReference type="InterPro" id="IPR001429">
    <property type="entry name" value="P2X_purnocptor"/>
</dbReference>
<dbReference type="InterPro" id="IPR053792">
    <property type="entry name" value="P2X_RECEPTOR_CS"/>
</dbReference>
<dbReference type="NCBIfam" id="TIGR00863">
    <property type="entry name" value="P2X"/>
    <property type="match status" value="1"/>
</dbReference>
<dbReference type="PANTHER" id="PTHR10125">
    <property type="entry name" value="P2X PURINOCEPTOR"/>
    <property type="match status" value="1"/>
</dbReference>
<dbReference type="PANTHER" id="PTHR10125:SF4">
    <property type="entry name" value="P2X PURINOCEPTOR 2"/>
    <property type="match status" value="1"/>
</dbReference>
<dbReference type="Pfam" id="PF00864">
    <property type="entry name" value="P2X_receptor"/>
    <property type="match status" value="1"/>
</dbReference>
<dbReference type="PIRSF" id="PIRSF005713">
    <property type="entry name" value="P2X_purinoceptor"/>
    <property type="match status" value="1"/>
</dbReference>
<dbReference type="PRINTS" id="PR01309">
    <property type="entry name" value="P2X2RECEPTOR"/>
</dbReference>
<dbReference type="PRINTS" id="PR01307">
    <property type="entry name" value="P2XRECEPTOR"/>
</dbReference>
<dbReference type="PROSITE" id="PS01212">
    <property type="entry name" value="P2X_RECEPTOR"/>
    <property type="match status" value="1"/>
</dbReference>
<evidence type="ECO:0000250" key="1">
    <source>
        <dbReference type="UniProtKB" id="P49653"/>
    </source>
</evidence>
<evidence type="ECO:0000250" key="2">
    <source>
        <dbReference type="UniProtKB" id="P56373"/>
    </source>
</evidence>
<evidence type="ECO:0000250" key="3">
    <source>
        <dbReference type="UniProtKB" id="Q9UBL9"/>
    </source>
</evidence>
<evidence type="ECO:0000255" key="4"/>
<evidence type="ECO:0000256" key="5">
    <source>
        <dbReference type="SAM" id="MobiDB-lite"/>
    </source>
</evidence>
<evidence type="ECO:0000269" key="6">
    <source>
    </source>
</evidence>
<evidence type="ECO:0000269" key="7">
    <source>
    </source>
</evidence>
<evidence type="ECO:0000269" key="8">
    <source>
    </source>
</evidence>
<evidence type="ECO:0000269" key="9">
    <source>
    </source>
</evidence>
<evidence type="ECO:0000269" key="10">
    <source>
    </source>
</evidence>
<evidence type="ECO:0000269" key="11">
    <source>
    </source>
</evidence>
<evidence type="ECO:0000269" key="12">
    <source>
    </source>
</evidence>
<evidence type="ECO:0000303" key="13">
    <source>
    </source>
</evidence>
<evidence type="ECO:0000303" key="14">
    <source>
    </source>
</evidence>
<evidence type="ECO:0000303" key="15">
    <source>
    </source>
</evidence>
<evidence type="ECO:0000305" key="16"/>
<organism>
    <name type="scientific">Mus musculus</name>
    <name type="common">Mouse</name>
    <dbReference type="NCBI Taxonomy" id="10090"/>
    <lineage>
        <taxon>Eukaryota</taxon>
        <taxon>Metazoa</taxon>
        <taxon>Chordata</taxon>
        <taxon>Craniata</taxon>
        <taxon>Vertebrata</taxon>
        <taxon>Euteleostomi</taxon>
        <taxon>Mammalia</taxon>
        <taxon>Eutheria</taxon>
        <taxon>Euarchontoglires</taxon>
        <taxon>Glires</taxon>
        <taxon>Rodentia</taxon>
        <taxon>Myomorpha</taxon>
        <taxon>Muroidea</taxon>
        <taxon>Muridae</taxon>
        <taxon>Murinae</taxon>
        <taxon>Mus</taxon>
        <taxon>Mus</taxon>
    </lineage>
</organism>
<sequence length="485" mass="53937">MAAAQPRLPAGAAMVRRLARGCWSAFWDYETPKVIVVRNRRLGFVHRMVQLLILLYFVWYVFIVQKSYQDSETGPESSIITKVKGITMSEHKVWDVEEYVKPPEGGSVVSIITRIEVTPSQTLGTCPESMRVHSSTCHLDDDCVAGQLDMQGNGIRTGRCVPYYHGDSKTCEVSAWCPVEDGTSENHFLGKMAPNFTILIKNSIHYPKFKFSKGNIASQKSDYLKHCTFDQDSDPYCPIFRLGFIVEQAGENFTELAHKGGVIGVIINWNCDLDLSESECNPKYSFRRLDPKYDPASSGYNFRFAKYYKINGTTTTRTLIKAYGIRIDVIVHGQAGKFSLIPTIINLATALTSIGVGSFLCDWILLTFMNKNKLYSHKKFDKVRTPRHPSSRWPVTLALVLGQIPPPPSHYSQDQPPSLPSGEGPALGEGAELPLAVQPPRSCSSSALTEQVVDTLDQHMGQRPPVPEPSQQDSTSTDPKGLAQL</sequence>